<keyword id="KW-0456">Lyase</keyword>
<keyword id="KW-0663">Pyridoxal phosphate</keyword>
<keyword id="KW-1185">Reference proteome</keyword>
<keyword id="KW-0704">Schiff base</keyword>
<accession>Q81W27</accession>
<accession>Q6I529</accession>
<accession>Q6KYS3</accession>
<reference key="1">
    <citation type="journal article" date="2003" name="Nature">
        <title>The genome sequence of Bacillus anthracis Ames and comparison to closely related bacteria.</title>
        <authorList>
            <person name="Read T.D."/>
            <person name="Peterson S.N."/>
            <person name="Tourasse N.J."/>
            <person name="Baillie L.W."/>
            <person name="Paulsen I.T."/>
            <person name="Nelson K.E."/>
            <person name="Tettelin H."/>
            <person name="Fouts D.E."/>
            <person name="Eisen J.A."/>
            <person name="Gill S.R."/>
            <person name="Holtzapple E.K."/>
            <person name="Okstad O.A."/>
            <person name="Helgason E."/>
            <person name="Rilstone J."/>
            <person name="Wu M."/>
            <person name="Kolonay J.F."/>
            <person name="Beanan M.J."/>
            <person name="Dodson R.J."/>
            <person name="Brinkac L.M."/>
            <person name="Gwinn M.L."/>
            <person name="DeBoy R.T."/>
            <person name="Madpu R."/>
            <person name="Daugherty S.C."/>
            <person name="Durkin A.S."/>
            <person name="Haft D.H."/>
            <person name="Nelson W.C."/>
            <person name="Peterson J.D."/>
            <person name="Pop M."/>
            <person name="Khouri H.M."/>
            <person name="Radune D."/>
            <person name="Benton J.L."/>
            <person name="Mahamoud Y."/>
            <person name="Jiang L."/>
            <person name="Hance I.R."/>
            <person name="Weidman J.F."/>
            <person name="Berry K.J."/>
            <person name="Plaut R.D."/>
            <person name="Wolf A.M."/>
            <person name="Watkins K.L."/>
            <person name="Nierman W.C."/>
            <person name="Hazen A."/>
            <person name="Cline R.T."/>
            <person name="Redmond C."/>
            <person name="Thwaite J.E."/>
            <person name="White O."/>
            <person name="Salzberg S.L."/>
            <person name="Thomason B."/>
            <person name="Friedlander A.M."/>
            <person name="Koehler T.M."/>
            <person name="Hanna P.C."/>
            <person name="Kolstoe A.-B."/>
            <person name="Fraser C.M."/>
        </authorList>
    </citation>
    <scope>NUCLEOTIDE SEQUENCE [LARGE SCALE GENOMIC DNA]</scope>
    <source>
        <strain>Ames / isolate Porton</strain>
    </source>
</reference>
<reference key="2">
    <citation type="journal article" date="2009" name="J. Bacteriol.">
        <title>The complete genome sequence of Bacillus anthracis Ames 'Ancestor'.</title>
        <authorList>
            <person name="Ravel J."/>
            <person name="Jiang L."/>
            <person name="Stanley S.T."/>
            <person name="Wilson M.R."/>
            <person name="Decker R.S."/>
            <person name="Read T.D."/>
            <person name="Worsham P."/>
            <person name="Keim P.S."/>
            <person name="Salzberg S.L."/>
            <person name="Fraser-Liggett C.M."/>
            <person name="Rasko D.A."/>
        </authorList>
    </citation>
    <scope>NUCLEOTIDE SEQUENCE [LARGE SCALE GENOMIC DNA]</scope>
    <source>
        <strain>Ames ancestor</strain>
    </source>
</reference>
<reference key="3">
    <citation type="submission" date="2004-01" db="EMBL/GenBank/DDBJ databases">
        <title>Complete genome sequence of Bacillus anthracis Sterne.</title>
        <authorList>
            <person name="Brettin T.S."/>
            <person name="Bruce D."/>
            <person name="Challacombe J.F."/>
            <person name="Gilna P."/>
            <person name="Han C."/>
            <person name="Hill K."/>
            <person name="Hitchcock P."/>
            <person name="Jackson P."/>
            <person name="Keim P."/>
            <person name="Longmire J."/>
            <person name="Lucas S."/>
            <person name="Okinaka R."/>
            <person name="Richardson P."/>
            <person name="Rubin E."/>
            <person name="Tice H."/>
        </authorList>
    </citation>
    <scope>NUCLEOTIDE SEQUENCE [LARGE SCALE GENOMIC DNA]</scope>
    <source>
        <strain>Sterne</strain>
    </source>
</reference>
<protein>
    <recommendedName>
        <fullName evidence="1">Pyridoxal 5'-phosphate synthase subunit PdxS</fullName>
        <shortName evidence="1">PLP synthase subunit PdxS</shortName>
        <ecNumber evidence="1">4.3.3.6</ecNumber>
    </recommendedName>
    <alternativeName>
        <fullName evidence="1">Pdx1</fullName>
    </alternativeName>
</protein>
<gene>
    <name evidence="1" type="primary">pdxS</name>
    <name type="ordered locus">BA_0010</name>
    <name type="ordered locus">GBAA_0010</name>
    <name type="ordered locus">BAS0013</name>
</gene>
<evidence type="ECO:0000255" key="1">
    <source>
        <dbReference type="HAMAP-Rule" id="MF_01824"/>
    </source>
</evidence>
<sequence length="295" mass="31804">MTNVTGTERVKRGMAEMQKGGVIMDVINAEQAKIAEEAGAVAIMALERVPADIRAAGGVSRMADPTIVEEVMGAVSIPVMAKCRIGHLVEARVLESLGVDYIDESEVLTPADEVYHLNKRDYTVPFVCGCRDIGEAARRIAEGASMLRTKGEPGTGNIVEAVRHMRQVNAEIRQVASLREDELMTYAKNTGAPYEVLLEIKRLGRLPVVNFAAGGVATPADAALMMQLGADGVFVGSGIFKSENPAKFARAIVEATTHYEDYELIASLSKGLGNAMKGIEISTLLPEQRMQERGW</sequence>
<comment type="function">
    <text evidence="1">Catalyzes the formation of pyridoxal 5'-phosphate from ribose 5-phosphate (RBP), glyceraldehyde 3-phosphate (G3P) and ammonia. The ammonia is provided by the PdxT subunit. Can also use ribulose 5-phosphate and dihydroxyacetone phosphate as substrates, resulting from enzyme-catalyzed isomerization of RBP and G3P, respectively.</text>
</comment>
<comment type="catalytic activity">
    <reaction evidence="1">
        <text>aldehydo-D-ribose 5-phosphate + D-glyceraldehyde 3-phosphate + L-glutamine = pyridoxal 5'-phosphate + L-glutamate + phosphate + 3 H2O + H(+)</text>
        <dbReference type="Rhea" id="RHEA:31507"/>
        <dbReference type="ChEBI" id="CHEBI:15377"/>
        <dbReference type="ChEBI" id="CHEBI:15378"/>
        <dbReference type="ChEBI" id="CHEBI:29985"/>
        <dbReference type="ChEBI" id="CHEBI:43474"/>
        <dbReference type="ChEBI" id="CHEBI:58273"/>
        <dbReference type="ChEBI" id="CHEBI:58359"/>
        <dbReference type="ChEBI" id="CHEBI:59776"/>
        <dbReference type="ChEBI" id="CHEBI:597326"/>
        <dbReference type="EC" id="4.3.3.6"/>
    </reaction>
</comment>
<comment type="pathway">
    <text evidence="1">Cofactor biosynthesis; pyridoxal 5'-phosphate biosynthesis.</text>
</comment>
<comment type="subunit">
    <text evidence="1">In the presence of PdxT, forms a dodecamer of heterodimers.</text>
</comment>
<comment type="similarity">
    <text evidence="1">Belongs to the PdxS/SNZ family.</text>
</comment>
<name>PDXS_BACAN</name>
<dbReference type="EC" id="4.3.3.6" evidence="1"/>
<dbReference type="EMBL" id="AE016879">
    <property type="protein sequence ID" value="AAP24067.1"/>
    <property type="molecule type" value="Genomic_DNA"/>
</dbReference>
<dbReference type="EMBL" id="AE017334">
    <property type="protein sequence ID" value="AAT29090.1"/>
    <property type="molecule type" value="Genomic_DNA"/>
</dbReference>
<dbReference type="EMBL" id="AE017225">
    <property type="protein sequence ID" value="AAT52352.1"/>
    <property type="molecule type" value="Genomic_DNA"/>
</dbReference>
<dbReference type="RefSeq" id="NP_842581.1">
    <property type="nucleotide sequence ID" value="NC_003997.3"/>
</dbReference>
<dbReference type="RefSeq" id="WP_000186153.1">
    <property type="nucleotide sequence ID" value="NZ_WXXJ01000022.1"/>
</dbReference>
<dbReference type="RefSeq" id="YP_026301.1">
    <property type="nucleotide sequence ID" value="NC_005945.1"/>
</dbReference>
<dbReference type="SMR" id="Q81W27"/>
<dbReference type="IntAct" id="Q81W27">
    <property type="interactions" value="1"/>
</dbReference>
<dbReference type="STRING" id="261594.GBAA_0010"/>
<dbReference type="DNASU" id="1083765"/>
<dbReference type="GeneID" id="45020049"/>
<dbReference type="KEGG" id="ban:BA_0010"/>
<dbReference type="KEGG" id="banh:HYU01_00080"/>
<dbReference type="KEGG" id="bar:GBAA_0010"/>
<dbReference type="KEGG" id="bat:BAS0013"/>
<dbReference type="PATRIC" id="fig|198094.11.peg.10"/>
<dbReference type="eggNOG" id="COG0214">
    <property type="taxonomic scope" value="Bacteria"/>
</dbReference>
<dbReference type="HOGENOM" id="CLU_055352_1_0_9"/>
<dbReference type="OMA" id="RYANRGW"/>
<dbReference type="OrthoDB" id="9772545at2"/>
<dbReference type="UniPathway" id="UPA00245"/>
<dbReference type="Proteomes" id="UP000000427">
    <property type="component" value="Chromosome"/>
</dbReference>
<dbReference type="Proteomes" id="UP000000594">
    <property type="component" value="Chromosome"/>
</dbReference>
<dbReference type="GO" id="GO:0036381">
    <property type="term" value="F:pyridoxal 5'-phosphate synthase (glutamine hydrolysing) activity"/>
    <property type="evidence" value="ECO:0007669"/>
    <property type="project" value="UniProtKB-UniRule"/>
</dbReference>
<dbReference type="GO" id="GO:0006520">
    <property type="term" value="P:amino acid metabolic process"/>
    <property type="evidence" value="ECO:0007669"/>
    <property type="project" value="TreeGrafter"/>
</dbReference>
<dbReference type="GO" id="GO:0042823">
    <property type="term" value="P:pyridoxal phosphate biosynthetic process"/>
    <property type="evidence" value="ECO:0007669"/>
    <property type="project" value="UniProtKB-UniRule"/>
</dbReference>
<dbReference type="GO" id="GO:0008615">
    <property type="term" value="P:pyridoxine biosynthetic process"/>
    <property type="evidence" value="ECO:0007669"/>
    <property type="project" value="TreeGrafter"/>
</dbReference>
<dbReference type="CDD" id="cd04727">
    <property type="entry name" value="pdxS"/>
    <property type="match status" value="1"/>
</dbReference>
<dbReference type="FunFam" id="3.20.20.70:FF:000001">
    <property type="entry name" value="Pyridoxine biosynthesis protein PDX1"/>
    <property type="match status" value="1"/>
</dbReference>
<dbReference type="Gene3D" id="3.20.20.70">
    <property type="entry name" value="Aldolase class I"/>
    <property type="match status" value="1"/>
</dbReference>
<dbReference type="HAMAP" id="MF_01824">
    <property type="entry name" value="PdxS"/>
    <property type="match status" value="1"/>
</dbReference>
<dbReference type="InterPro" id="IPR013785">
    <property type="entry name" value="Aldolase_TIM"/>
</dbReference>
<dbReference type="InterPro" id="IPR001852">
    <property type="entry name" value="PdxS/SNZ"/>
</dbReference>
<dbReference type="InterPro" id="IPR033755">
    <property type="entry name" value="PdxS/SNZ_N"/>
</dbReference>
<dbReference type="InterPro" id="IPR011060">
    <property type="entry name" value="RibuloseP-bd_barrel"/>
</dbReference>
<dbReference type="NCBIfam" id="NF003215">
    <property type="entry name" value="PRK04180.1"/>
    <property type="match status" value="1"/>
</dbReference>
<dbReference type="NCBIfam" id="TIGR00343">
    <property type="entry name" value="pyridoxal 5'-phosphate synthase lyase subunit PdxS"/>
    <property type="match status" value="1"/>
</dbReference>
<dbReference type="PANTHER" id="PTHR31829">
    <property type="entry name" value="PYRIDOXAL 5'-PHOSPHATE SYNTHASE SUBUNIT SNZ1-RELATED"/>
    <property type="match status" value="1"/>
</dbReference>
<dbReference type="PANTHER" id="PTHR31829:SF0">
    <property type="entry name" value="PYRIDOXAL 5'-PHOSPHATE SYNTHASE SUBUNIT SNZ1-RELATED"/>
    <property type="match status" value="1"/>
</dbReference>
<dbReference type="Pfam" id="PF01680">
    <property type="entry name" value="SOR_SNZ"/>
    <property type="match status" value="1"/>
</dbReference>
<dbReference type="PIRSF" id="PIRSF029271">
    <property type="entry name" value="Pdx1"/>
    <property type="match status" value="1"/>
</dbReference>
<dbReference type="SUPFAM" id="SSF51366">
    <property type="entry name" value="Ribulose-phoshate binding barrel"/>
    <property type="match status" value="1"/>
</dbReference>
<dbReference type="PROSITE" id="PS01235">
    <property type="entry name" value="PDXS_SNZ_1"/>
    <property type="match status" value="1"/>
</dbReference>
<dbReference type="PROSITE" id="PS51129">
    <property type="entry name" value="PDXS_SNZ_2"/>
    <property type="match status" value="1"/>
</dbReference>
<proteinExistence type="inferred from homology"/>
<feature type="chain" id="PRO_0000109374" description="Pyridoxal 5'-phosphate synthase subunit PdxS">
    <location>
        <begin position="1"/>
        <end position="295"/>
    </location>
</feature>
<feature type="active site" description="Schiff-base intermediate with D-ribose 5-phosphate" evidence="1">
    <location>
        <position position="82"/>
    </location>
</feature>
<feature type="binding site" evidence="1">
    <location>
        <position position="25"/>
    </location>
    <ligand>
        <name>D-ribose 5-phosphate</name>
        <dbReference type="ChEBI" id="CHEBI:78346"/>
    </ligand>
</feature>
<feature type="binding site" evidence="1">
    <location>
        <position position="154"/>
    </location>
    <ligand>
        <name>D-ribose 5-phosphate</name>
        <dbReference type="ChEBI" id="CHEBI:78346"/>
    </ligand>
</feature>
<feature type="binding site" evidence="1">
    <location>
        <position position="166"/>
    </location>
    <ligand>
        <name>D-glyceraldehyde 3-phosphate</name>
        <dbReference type="ChEBI" id="CHEBI:59776"/>
    </ligand>
</feature>
<feature type="binding site" evidence="1">
    <location>
        <position position="215"/>
    </location>
    <ligand>
        <name>D-ribose 5-phosphate</name>
        <dbReference type="ChEBI" id="CHEBI:78346"/>
    </ligand>
</feature>
<feature type="binding site" evidence="1">
    <location>
        <begin position="236"/>
        <end position="237"/>
    </location>
    <ligand>
        <name>D-ribose 5-phosphate</name>
        <dbReference type="ChEBI" id="CHEBI:78346"/>
    </ligand>
</feature>
<organism>
    <name type="scientific">Bacillus anthracis</name>
    <dbReference type="NCBI Taxonomy" id="1392"/>
    <lineage>
        <taxon>Bacteria</taxon>
        <taxon>Bacillati</taxon>
        <taxon>Bacillota</taxon>
        <taxon>Bacilli</taxon>
        <taxon>Bacillales</taxon>
        <taxon>Bacillaceae</taxon>
        <taxon>Bacillus</taxon>
        <taxon>Bacillus cereus group</taxon>
    </lineage>
</organism>